<feature type="chain" id="PRO_0000364823" description="Ferredoxin--NADP reductase 2">
    <location>
        <begin position="1"/>
        <end position="341"/>
    </location>
</feature>
<feature type="binding site" evidence="1">
    <location>
        <position position="42"/>
    </location>
    <ligand>
        <name>FAD</name>
        <dbReference type="ChEBI" id="CHEBI:57692"/>
    </ligand>
</feature>
<feature type="binding site" evidence="1">
    <location>
        <position position="50"/>
    </location>
    <ligand>
        <name>FAD</name>
        <dbReference type="ChEBI" id="CHEBI:57692"/>
    </ligand>
</feature>
<feature type="binding site" evidence="1">
    <location>
        <position position="55"/>
    </location>
    <ligand>
        <name>FAD</name>
        <dbReference type="ChEBI" id="CHEBI:57692"/>
    </ligand>
</feature>
<feature type="binding site" evidence="1">
    <location>
        <position position="95"/>
    </location>
    <ligand>
        <name>FAD</name>
        <dbReference type="ChEBI" id="CHEBI:57692"/>
    </ligand>
</feature>
<feature type="binding site" evidence="1">
    <location>
        <position position="129"/>
    </location>
    <ligand>
        <name>FAD</name>
        <dbReference type="ChEBI" id="CHEBI:57692"/>
    </ligand>
</feature>
<feature type="binding site" evidence="1">
    <location>
        <position position="294"/>
    </location>
    <ligand>
        <name>FAD</name>
        <dbReference type="ChEBI" id="CHEBI:57692"/>
    </ligand>
</feature>
<feature type="binding site" evidence="1">
    <location>
        <position position="335"/>
    </location>
    <ligand>
        <name>FAD</name>
        <dbReference type="ChEBI" id="CHEBI:57692"/>
    </ligand>
</feature>
<sequence length="341" mass="37169">MKDLLRQENNEVADITIIGAGPIGLYAAFYAGLRTMKARVVDSLPQIGGQLTALYPKKAIYDVAGYPKIVAEALIANLAIQASQYHPEILTSTQITEIHRNGALFELFSEDGRQFLSKTVLIAAGVGAFAPRKLPMEEAVKWEGNGLFYFVQDPTVFFGKKVLIIGGGDSALDWAMALMANAEVTLIHRRDKFTAHEDSVEKVRKSPANIKTFYELKSIVGKDSPQGKELHKVVIFNNKTNEETTLEVDAILCNLGFSTNLGPIKNWGVEILNNAVKVDVNMATNVTGIYAAGDIVWHPAKLKLIATGFAEAAIAINNAKTIVEPHANFFPGHSSSSKEKK</sequence>
<gene>
    <name type="ordered locus">Ctha_2529</name>
</gene>
<dbReference type="EC" id="1.18.1.2" evidence="1"/>
<dbReference type="EMBL" id="CP001100">
    <property type="protein sequence ID" value="ACF14978.1"/>
    <property type="molecule type" value="Genomic_DNA"/>
</dbReference>
<dbReference type="RefSeq" id="WP_012501060.1">
    <property type="nucleotide sequence ID" value="NC_011026.1"/>
</dbReference>
<dbReference type="SMR" id="B3QXR3"/>
<dbReference type="STRING" id="517418.Ctha_2529"/>
<dbReference type="KEGG" id="cts:Ctha_2529"/>
<dbReference type="eggNOG" id="COG0492">
    <property type="taxonomic scope" value="Bacteria"/>
</dbReference>
<dbReference type="HOGENOM" id="CLU_031864_5_5_10"/>
<dbReference type="OrthoDB" id="9806179at2"/>
<dbReference type="Proteomes" id="UP000001208">
    <property type="component" value="Chromosome"/>
</dbReference>
<dbReference type="GO" id="GO:0004324">
    <property type="term" value="F:ferredoxin-NADP+ reductase activity"/>
    <property type="evidence" value="ECO:0007669"/>
    <property type="project" value="UniProtKB-UniRule"/>
</dbReference>
<dbReference type="GO" id="GO:0050660">
    <property type="term" value="F:flavin adenine dinucleotide binding"/>
    <property type="evidence" value="ECO:0007669"/>
    <property type="project" value="UniProtKB-UniRule"/>
</dbReference>
<dbReference type="GO" id="GO:0050661">
    <property type="term" value="F:NADP binding"/>
    <property type="evidence" value="ECO:0007669"/>
    <property type="project" value="UniProtKB-UniRule"/>
</dbReference>
<dbReference type="Gene3D" id="3.50.50.60">
    <property type="entry name" value="FAD/NAD(P)-binding domain"/>
    <property type="match status" value="2"/>
</dbReference>
<dbReference type="HAMAP" id="MF_01685">
    <property type="entry name" value="FENR2"/>
    <property type="match status" value="1"/>
</dbReference>
<dbReference type="InterPro" id="IPR036188">
    <property type="entry name" value="FAD/NAD-bd_sf"/>
</dbReference>
<dbReference type="InterPro" id="IPR023753">
    <property type="entry name" value="FAD/NAD-binding_dom"/>
</dbReference>
<dbReference type="InterPro" id="IPR022890">
    <property type="entry name" value="Fd--NADP_Rdtase_type_2"/>
</dbReference>
<dbReference type="InterPro" id="IPR050097">
    <property type="entry name" value="Ferredoxin-NADP_redctase_2"/>
</dbReference>
<dbReference type="PANTHER" id="PTHR48105">
    <property type="entry name" value="THIOREDOXIN REDUCTASE 1-RELATED-RELATED"/>
    <property type="match status" value="1"/>
</dbReference>
<dbReference type="Pfam" id="PF07992">
    <property type="entry name" value="Pyr_redox_2"/>
    <property type="match status" value="1"/>
</dbReference>
<dbReference type="PRINTS" id="PR00368">
    <property type="entry name" value="FADPNR"/>
</dbReference>
<dbReference type="PRINTS" id="PR00469">
    <property type="entry name" value="PNDRDTASEII"/>
</dbReference>
<dbReference type="SUPFAM" id="SSF51905">
    <property type="entry name" value="FAD/NAD(P)-binding domain"/>
    <property type="match status" value="1"/>
</dbReference>
<proteinExistence type="inferred from homology"/>
<keyword id="KW-0274">FAD</keyword>
<keyword id="KW-0285">Flavoprotein</keyword>
<keyword id="KW-0521">NADP</keyword>
<keyword id="KW-0560">Oxidoreductase</keyword>
<keyword id="KW-1185">Reference proteome</keyword>
<organism>
    <name type="scientific">Chloroherpeton thalassium (strain ATCC 35110 / GB-78)</name>
    <dbReference type="NCBI Taxonomy" id="517418"/>
    <lineage>
        <taxon>Bacteria</taxon>
        <taxon>Pseudomonadati</taxon>
        <taxon>Chlorobiota</taxon>
        <taxon>Chlorobiia</taxon>
        <taxon>Chlorobiales</taxon>
        <taxon>Chloroherpetonaceae</taxon>
        <taxon>Chloroherpeton</taxon>
    </lineage>
</organism>
<evidence type="ECO:0000255" key="1">
    <source>
        <dbReference type="HAMAP-Rule" id="MF_01685"/>
    </source>
</evidence>
<name>FENR2_CHLT3</name>
<reference key="1">
    <citation type="submission" date="2008-06" db="EMBL/GenBank/DDBJ databases">
        <title>Complete sequence of Chloroherpeton thalassium ATCC 35110.</title>
        <authorList>
            <consortium name="US DOE Joint Genome Institute"/>
            <person name="Lucas S."/>
            <person name="Copeland A."/>
            <person name="Lapidus A."/>
            <person name="Glavina del Rio T."/>
            <person name="Dalin E."/>
            <person name="Tice H."/>
            <person name="Bruce D."/>
            <person name="Goodwin L."/>
            <person name="Pitluck S."/>
            <person name="Schmutz J."/>
            <person name="Larimer F."/>
            <person name="Land M."/>
            <person name="Hauser L."/>
            <person name="Kyrpides N."/>
            <person name="Mikhailova N."/>
            <person name="Liu Z."/>
            <person name="Li T."/>
            <person name="Zhao F."/>
            <person name="Overmann J."/>
            <person name="Bryant D.A."/>
            <person name="Richardson P."/>
        </authorList>
    </citation>
    <scope>NUCLEOTIDE SEQUENCE [LARGE SCALE GENOMIC DNA]</scope>
    <source>
        <strain>ATCC 35110 / GB-78</strain>
    </source>
</reference>
<accession>B3QXR3</accession>
<comment type="catalytic activity">
    <reaction evidence="1">
        <text>2 reduced [2Fe-2S]-[ferredoxin] + NADP(+) + H(+) = 2 oxidized [2Fe-2S]-[ferredoxin] + NADPH</text>
        <dbReference type="Rhea" id="RHEA:20125"/>
        <dbReference type="Rhea" id="RHEA-COMP:10000"/>
        <dbReference type="Rhea" id="RHEA-COMP:10001"/>
        <dbReference type="ChEBI" id="CHEBI:15378"/>
        <dbReference type="ChEBI" id="CHEBI:33737"/>
        <dbReference type="ChEBI" id="CHEBI:33738"/>
        <dbReference type="ChEBI" id="CHEBI:57783"/>
        <dbReference type="ChEBI" id="CHEBI:58349"/>
        <dbReference type="EC" id="1.18.1.2"/>
    </reaction>
</comment>
<comment type="cofactor">
    <cofactor evidence="1">
        <name>FAD</name>
        <dbReference type="ChEBI" id="CHEBI:57692"/>
    </cofactor>
    <text evidence="1">Binds 1 FAD per subunit.</text>
</comment>
<comment type="subunit">
    <text evidence="1">Homodimer.</text>
</comment>
<comment type="similarity">
    <text evidence="1">Belongs to the ferredoxin--NADP reductase type 2 family.</text>
</comment>
<protein>
    <recommendedName>
        <fullName evidence="1">Ferredoxin--NADP reductase 2</fullName>
        <shortName evidence="1">FNR 2</shortName>
        <shortName evidence="1">Fd-NADP(+) reductase 2</shortName>
        <ecNumber evidence="1">1.18.1.2</ecNumber>
    </recommendedName>
</protein>